<organism>
    <name type="scientific">Azotobacter vinelandii (strain DJ / ATCC BAA-1303)</name>
    <dbReference type="NCBI Taxonomy" id="322710"/>
    <lineage>
        <taxon>Bacteria</taxon>
        <taxon>Pseudomonadati</taxon>
        <taxon>Pseudomonadota</taxon>
        <taxon>Gammaproteobacteria</taxon>
        <taxon>Pseudomonadales</taxon>
        <taxon>Pseudomonadaceae</taxon>
        <taxon>Azotobacter</taxon>
    </lineage>
</organism>
<comment type="function">
    <text evidence="1">Catalyzes the deamination of dCTP to dUTP.</text>
</comment>
<comment type="catalytic activity">
    <reaction evidence="1">
        <text>dCTP + H2O + H(+) = dUTP + NH4(+)</text>
        <dbReference type="Rhea" id="RHEA:22680"/>
        <dbReference type="ChEBI" id="CHEBI:15377"/>
        <dbReference type="ChEBI" id="CHEBI:15378"/>
        <dbReference type="ChEBI" id="CHEBI:28938"/>
        <dbReference type="ChEBI" id="CHEBI:61481"/>
        <dbReference type="ChEBI" id="CHEBI:61555"/>
        <dbReference type="EC" id="3.5.4.13"/>
    </reaction>
</comment>
<comment type="pathway">
    <text evidence="1">Pyrimidine metabolism; dUMP biosynthesis; dUMP from dCTP (dUTP route): step 1/2.</text>
</comment>
<comment type="subunit">
    <text evidence="1">Homotrimer.</text>
</comment>
<comment type="similarity">
    <text evidence="1">Belongs to the dCTP deaminase family.</text>
</comment>
<gene>
    <name evidence="1" type="primary">dcd</name>
    <name type="ordered locus">Avin_19300</name>
</gene>
<protein>
    <recommendedName>
        <fullName evidence="1">dCTP deaminase</fullName>
        <ecNumber evidence="1">3.5.4.13</ecNumber>
    </recommendedName>
    <alternativeName>
        <fullName evidence="1">Deoxycytidine triphosphate deaminase</fullName>
    </alternativeName>
</protein>
<keyword id="KW-0378">Hydrolase</keyword>
<keyword id="KW-0546">Nucleotide metabolism</keyword>
<keyword id="KW-0547">Nucleotide-binding</keyword>
<dbReference type="EC" id="3.5.4.13" evidence="1"/>
<dbReference type="EMBL" id="CP001157">
    <property type="protein sequence ID" value="ACO78141.1"/>
    <property type="molecule type" value="Genomic_DNA"/>
</dbReference>
<dbReference type="RefSeq" id="WP_012700550.1">
    <property type="nucleotide sequence ID" value="NC_012560.1"/>
</dbReference>
<dbReference type="SMR" id="C1DEF6"/>
<dbReference type="STRING" id="322710.Avin_19300"/>
<dbReference type="EnsemblBacteria" id="ACO78141">
    <property type="protein sequence ID" value="ACO78141"/>
    <property type="gene ID" value="Avin_19300"/>
</dbReference>
<dbReference type="GeneID" id="88185172"/>
<dbReference type="KEGG" id="avn:Avin_19300"/>
<dbReference type="eggNOG" id="COG0717">
    <property type="taxonomic scope" value="Bacteria"/>
</dbReference>
<dbReference type="HOGENOM" id="CLU_087476_4_0_6"/>
<dbReference type="OrthoDB" id="9780956at2"/>
<dbReference type="UniPathway" id="UPA00610">
    <property type="reaction ID" value="UER00665"/>
</dbReference>
<dbReference type="Proteomes" id="UP000002424">
    <property type="component" value="Chromosome"/>
</dbReference>
<dbReference type="GO" id="GO:0008829">
    <property type="term" value="F:dCTP deaminase activity"/>
    <property type="evidence" value="ECO:0007669"/>
    <property type="project" value="UniProtKB-UniRule"/>
</dbReference>
<dbReference type="GO" id="GO:0000166">
    <property type="term" value="F:nucleotide binding"/>
    <property type="evidence" value="ECO:0007669"/>
    <property type="project" value="UniProtKB-KW"/>
</dbReference>
<dbReference type="GO" id="GO:0006226">
    <property type="term" value="P:dUMP biosynthetic process"/>
    <property type="evidence" value="ECO:0007669"/>
    <property type="project" value="UniProtKB-UniPathway"/>
</dbReference>
<dbReference type="GO" id="GO:0006229">
    <property type="term" value="P:dUTP biosynthetic process"/>
    <property type="evidence" value="ECO:0007669"/>
    <property type="project" value="UniProtKB-UniRule"/>
</dbReference>
<dbReference type="GO" id="GO:0015949">
    <property type="term" value="P:nucleobase-containing small molecule interconversion"/>
    <property type="evidence" value="ECO:0007669"/>
    <property type="project" value="TreeGrafter"/>
</dbReference>
<dbReference type="CDD" id="cd07557">
    <property type="entry name" value="trimeric_dUTPase"/>
    <property type="match status" value="1"/>
</dbReference>
<dbReference type="FunFam" id="2.70.40.10:FF:000001">
    <property type="entry name" value="dCTP deaminase"/>
    <property type="match status" value="1"/>
</dbReference>
<dbReference type="Gene3D" id="2.70.40.10">
    <property type="match status" value="1"/>
</dbReference>
<dbReference type="HAMAP" id="MF_00146">
    <property type="entry name" value="dCTP_deaminase"/>
    <property type="match status" value="1"/>
</dbReference>
<dbReference type="InterPro" id="IPR011962">
    <property type="entry name" value="dCTP_deaminase"/>
</dbReference>
<dbReference type="InterPro" id="IPR036157">
    <property type="entry name" value="dUTPase-like_sf"/>
</dbReference>
<dbReference type="InterPro" id="IPR033704">
    <property type="entry name" value="dUTPase_trimeric"/>
</dbReference>
<dbReference type="NCBIfam" id="TIGR02274">
    <property type="entry name" value="dCTP_deam"/>
    <property type="match status" value="1"/>
</dbReference>
<dbReference type="PANTHER" id="PTHR42680">
    <property type="entry name" value="DCTP DEAMINASE"/>
    <property type="match status" value="1"/>
</dbReference>
<dbReference type="PANTHER" id="PTHR42680:SF3">
    <property type="entry name" value="DCTP DEAMINASE"/>
    <property type="match status" value="1"/>
</dbReference>
<dbReference type="Pfam" id="PF22769">
    <property type="entry name" value="DCD"/>
    <property type="match status" value="1"/>
</dbReference>
<dbReference type="SUPFAM" id="SSF51283">
    <property type="entry name" value="dUTPase-like"/>
    <property type="match status" value="1"/>
</dbReference>
<sequence length="188" mass="21233">MTIKSDKWIRRMAREQGMIEPFVERQVRTEGSERLISYGVSSYGYDVRCADEFKVFTNIHSATVDPKNFDERSFVDVKGAVCIIPPNSFALARTVEYFRIPRNVLTICLGKSTYARCGIIVNVTPLEPEWEGHVTLEFSNTTTLPAKIYANEGVAQMLFLESDEPCEVSYKDRGGKYQGQTGVTLPKT</sequence>
<reference key="1">
    <citation type="journal article" date="2009" name="J. Bacteriol.">
        <title>Genome sequence of Azotobacter vinelandii, an obligate aerobe specialized to support diverse anaerobic metabolic processes.</title>
        <authorList>
            <person name="Setubal J.C."/>
            <person name="Dos Santos P."/>
            <person name="Goldman B.S."/>
            <person name="Ertesvaag H."/>
            <person name="Espin G."/>
            <person name="Rubio L.M."/>
            <person name="Valla S."/>
            <person name="Almeida N.F."/>
            <person name="Balasubramanian D."/>
            <person name="Cromes L."/>
            <person name="Curatti L."/>
            <person name="Du Z."/>
            <person name="Godsy E."/>
            <person name="Goodner B."/>
            <person name="Hellner-Burris K."/>
            <person name="Hernandez J.A."/>
            <person name="Houmiel K."/>
            <person name="Imperial J."/>
            <person name="Kennedy C."/>
            <person name="Larson T.J."/>
            <person name="Latreille P."/>
            <person name="Ligon L.S."/>
            <person name="Lu J."/>
            <person name="Maerk M."/>
            <person name="Miller N.M."/>
            <person name="Norton S."/>
            <person name="O'Carroll I.P."/>
            <person name="Paulsen I."/>
            <person name="Raulfs E.C."/>
            <person name="Roemer R."/>
            <person name="Rosser J."/>
            <person name="Segura D."/>
            <person name="Slater S."/>
            <person name="Stricklin S.L."/>
            <person name="Studholme D.J."/>
            <person name="Sun J."/>
            <person name="Viana C.J."/>
            <person name="Wallin E."/>
            <person name="Wang B."/>
            <person name="Wheeler C."/>
            <person name="Zhu H."/>
            <person name="Dean D.R."/>
            <person name="Dixon R."/>
            <person name="Wood D."/>
        </authorList>
    </citation>
    <scope>NUCLEOTIDE SEQUENCE [LARGE SCALE GENOMIC DNA]</scope>
    <source>
        <strain>DJ / ATCC BAA-1303</strain>
    </source>
</reference>
<evidence type="ECO:0000255" key="1">
    <source>
        <dbReference type="HAMAP-Rule" id="MF_00146"/>
    </source>
</evidence>
<name>DCD_AZOVD</name>
<feature type="chain" id="PRO_1000203354" description="dCTP deaminase">
    <location>
        <begin position="1"/>
        <end position="188"/>
    </location>
</feature>
<feature type="active site" description="Proton donor/acceptor" evidence="1">
    <location>
        <position position="137"/>
    </location>
</feature>
<feature type="binding site" evidence="1">
    <location>
        <begin position="111"/>
        <end position="116"/>
    </location>
    <ligand>
        <name>dCTP</name>
        <dbReference type="ChEBI" id="CHEBI:61481"/>
    </ligand>
</feature>
<feature type="binding site" evidence="1">
    <location>
        <begin position="135"/>
        <end position="137"/>
    </location>
    <ligand>
        <name>dCTP</name>
        <dbReference type="ChEBI" id="CHEBI:61481"/>
    </ligand>
</feature>
<feature type="binding site" evidence="1">
    <location>
        <position position="156"/>
    </location>
    <ligand>
        <name>dCTP</name>
        <dbReference type="ChEBI" id="CHEBI:61481"/>
    </ligand>
</feature>
<feature type="binding site" evidence="1">
    <location>
        <position position="170"/>
    </location>
    <ligand>
        <name>dCTP</name>
        <dbReference type="ChEBI" id="CHEBI:61481"/>
    </ligand>
</feature>
<feature type="binding site" evidence="1">
    <location>
        <position position="180"/>
    </location>
    <ligand>
        <name>dCTP</name>
        <dbReference type="ChEBI" id="CHEBI:61481"/>
    </ligand>
</feature>
<proteinExistence type="inferred from homology"/>
<accession>C1DEF6</accession>